<reference key="1">
    <citation type="journal article" date="2001" name="Proc. Natl. Acad. Sci. U.S.A.">
        <title>Genome sequence of an industrial microorganism Streptomyces avermitilis: deducing the ability of producing secondary metabolites.</title>
        <authorList>
            <person name="Omura S."/>
            <person name="Ikeda H."/>
            <person name="Ishikawa J."/>
            <person name="Hanamoto A."/>
            <person name="Takahashi C."/>
            <person name="Shinose M."/>
            <person name="Takahashi Y."/>
            <person name="Horikawa H."/>
            <person name="Nakazawa H."/>
            <person name="Osonoe T."/>
            <person name="Kikuchi H."/>
            <person name="Shiba T."/>
            <person name="Sakaki Y."/>
            <person name="Hattori M."/>
        </authorList>
    </citation>
    <scope>NUCLEOTIDE SEQUENCE [LARGE SCALE GENOMIC DNA]</scope>
    <source>
        <strain>ATCC 31267 / DSM 46492 / JCM 5070 / NBRC 14893 / NCIMB 12804 / NRRL 8165 / MA-4680</strain>
    </source>
</reference>
<reference key="2">
    <citation type="journal article" date="2003" name="Nat. Biotechnol.">
        <title>Complete genome sequence and comparative analysis of the industrial microorganism Streptomyces avermitilis.</title>
        <authorList>
            <person name="Ikeda H."/>
            <person name="Ishikawa J."/>
            <person name="Hanamoto A."/>
            <person name="Shinose M."/>
            <person name="Kikuchi H."/>
            <person name="Shiba T."/>
            <person name="Sakaki Y."/>
            <person name="Hattori M."/>
            <person name="Omura S."/>
        </authorList>
    </citation>
    <scope>NUCLEOTIDE SEQUENCE [LARGE SCALE GENOMIC DNA]</scope>
    <source>
        <strain>ATCC 31267 / DSM 46492 / JCM 5070 / NBRC 14893 / NCIMB 12804 / NRRL 8165 / MA-4680</strain>
    </source>
</reference>
<comment type="function">
    <text evidence="1">NDH-1 shuttles electrons from NADH, via FMN and iron-sulfur (Fe-S) centers, to quinones in the respiratory chain. The immediate electron acceptor for the enzyme in this species is believed to be ubiquinone. Couples the redox reaction to proton translocation (for every two electrons transferred, four hydrogen ions are translocated across the cytoplasmic membrane), and thus conserves the redox energy in a proton gradient.</text>
</comment>
<comment type="catalytic activity">
    <reaction evidence="1">
        <text>a quinone + NADH + 5 H(+)(in) = a quinol + NAD(+) + 4 H(+)(out)</text>
        <dbReference type="Rhea" id="RHEA:57888"/>
        <dbReference type="ChEBI" id="CHEBI:15378"/>
        <dbReference type="ChEBI" id="CHEBI:24646"/>
        <dbReference type="ChEBI" id="CHEBI:57540"/>
        <dbReference type="ChEBI" id="CHEBI:57945"/>
        <dbReference type="ChEBI" id="CHEBI:132124"/>
    </reaction>
</comment>
<comment type="cofactor">
    <cofactor evidence="1">
        <name>[4Fe-4S] cluster</name>
        <dbReference type="ChEBI" id="CHEBI:49883"/>
    </cofactor>
    <text evidence="1">Binds 2 [4Fe-4S] clusters per subunit.</text>
</comment>
<comment type="subunit">
    <text evidence="1">NDH-1 is composed of 14 different subunits. Subunits NuoA, H, J, K, L, M, N constitute the membrane sector of the complex.</text>
</comment>
<comment type="subcellular location">
    <subcellularLocation>
        <location evidence="1">Cell membrane</location>
        <topology evidence="1">Peripheral membrane protein</topology>
    </subcellularLocation>
</comment>
<comment type="similarity">
    <text evidence="1">Belongs to the complex I 23 kDa subunit family.</text>
</comment>
<keyword id="KW-0004">4Fe-4S</keyword>
<keyword id="KW-1003">Cell membrane</keyword>
<keyword id="KW-0408">Iron</keyword>
<keyword id="KW-0411">Iron-sulfur</keyword>
<keyword id="KW-0472">Membrane</keyword>
<keyword id="KW-0479">Metal-binding</keyword>
<keyword id="KW-0520">NAD</keyword>
<keyword id="KW-0874">Quinone</keyword>
<keyword id="KW-1185">Reference proteome</keyword>
<keyword id="KW-0677">Repeat</keyword>
<keyword id="KW-1278">Translocase</keyword>
<protein>
    <recommendedName>
        <fullName evidence="1">NADH-quinone oxidoreductase subunit I 1</fullName>
        <ecNumber evidence="1">7.1.1.-</ecNumber>
    </recommendedName>
    <alternativeName>
        <fullName evidence="1">NADH dehydrogenase I subunit I 1</fullName>
    </alternativeName>
    <alternativeName>
        <fullName evidence="1">NDH-1 subunit I 1</fullName>
    </alternativeName>
</protein>
<gene>
    <name evidence="1" type="primary">nuoI1</name>
    <name type="synonym">nuoI</name>
    <name type="ordered locus">SAV_4845</name>
</gene>
<dbReference type="EC" id="7.1.1.-" evidence="1"/>
<dbReference type="EMBL" id="BA000030">
    <property type="protein sequence ID" value="BAC72557.1"/>
    <property type="molecule type" value="Genomic_DNA"/>
</dbReference>
<dbReference type="RefSeq" id="WP_010986266.1">
    <property type="nucleotide sequence ID" value="NZ_JZJK01000077.1"/>
</dbReference>
<dbReference type="SMR" id="Q82DX3"/>
<dbReference type="GeneID" id="41541925"/>
<dbReference type="KEGG" id="sma:SAVERM_4845"/>
<dbReference type="eggNOG" id="COG1143">
    <property type="taxonomic scope" value="Bacteria"/>
</dbReference>
<dbReference type="HOGENOM" id="CLU_067218_4_0_11"/>
<dbReference type="OrthoDB" id="9808559at2"/>
<dbReference type="Proteomes" id="UP000000428">
    <property type="component" value="Chromosome"/>
</dbReference>
<dbReference type="GO" id="GO:0005886">
    <property type="term" value="C:plasma membrane"/>
    <property type="evidence" value="ECO:0007669"/>
    <property type="project" value="UniProtKB-SubCell"/>
</dbReference>
<dbReference type="GO" id="GO:0051539">
    <property type="term" value="F:4 iron, 4 sulfur cluster binding"/>
    <property type="evidence" value="ECO:0007669"/>
    <property type="project" value="UniProtKB-KW"/>
</dbReference>
<dbReference type="GO" id="GO:0005506">
    <property type="term" value="F:iron ion binding"/>
    <property type="evidence" value="ECO:0007669"/>
    <property type="project" value="UniProtKB-UniRule"/>
</dbReference>
<dbReference type="GO" id="GO:0050136">
    <property type="term" value="F:NADH:ubiquinone reductase (non-electrogenic) activity"/>
    <property type="evidence" value="ECO:0007669"/>
    <property type="project" value="UniProtKB-UniRule"/>
</dbReference>
<dbReference type="GO" id="GO:0048038">
    <property type="term" value="F:quinone binding"/>
    <property type="evidence" value="ECO:0007669"/>
    <property type="project" value="UniProtKB-KW"/>
</dbReference>
<dbReference type="GO" id="GO:0009060">
    <property type="term" value="P:aerobic respiration"/>
    <property type="evidence" value="ECO:0007669"/>
    <property type="project" value="TreeGrafter"/>
</dbReference>
<dbReference type="FunFam" id="3.30.70.3270:FF:000007">
    <property type="entry name" value="NADH-quinone oxidoreductase subunit I"/>
    <property type="match status" value="1"/>
</dbReference>
<dbReference type="Gene3D" id="3.30.70.3270">
    <property type="match status" value="1"/>
</dbReference>
<dbReference type="HAMAP" id="MF_01351">
    <property type="entry name" value="NDH1_NuoI"/>
    <property type="match status" value="1"/>
</dbReference>
<dbReference type="InterPro" id="IPR017896">
    <property type="entry name" value="4Fe4S_Fe-S-bd"/>
</dbReference>
<dbReference type="InterPro" id="IPR017900">
    <property type="entry name" value="4Fe4S_Fe_S_CS"/>
</dbReference>
<dbReference type="InterPro" id="IPR010226">
    <property type="entry name" value="NADH_quinone_OxRdtase_chainI"/>
</dbReference>
<dbReference type="NCBIfam" id="TIGR01971">
    <property type="entry name" value="NuoI"/>
    <property type="match status" value="1"/>
</dbReference>
<dbReference type="NCBIfam" id="NF004537">
    <property type="entry name" value="PRK05888.1-3"/>
    <property type="match status" value="1"/>
</dbReference>
<dbReference type="PANTHER" id="PTHR10849:SF20">
    <property type="entry name" value="NADH DEHYDROGENASE [UBIQUINONE] IRON-SULFUR PROTEIN 8, MITOCHONDRIAL"/>
    <property type="match status" value="1"/>
</dbReference>
<dbReference type="PANTHER" id="PTHR10849">
    <property type="entry name" value="NADH DEHYDROGENASE UBIQUINONE IRON-SULFUR PROTEIN 8, MITOCHONDRIAL"/>
    <property type="match status" value="1"/>
</dbReference>
<dbReference type="Pfam" id="PF12838">
    <property type="entry name" value="Fer4_7"/>
    <property type="match status" value="1"/>
</dbReference>
<dbReference type="SUPFAM" id="SSF54862">
    <property type="entry name" value="4Fe-4S ferredoxins"/>
    <property type="match status" value="1"/>
</dbReference>
<dbReference type="PROSITE" id="PS00198">
    <property type="entry name" value="4FE4S_FER_1"/>
    <property type="match status" value="2"/>
</dbReference>
<dbReference type="PROSITE" id="PS51379">
    <property type="entry name" value="4FE4S_FER_2"/>
    <property type="match status" value="2"/>
</dbReference>
<name>NUOI1_STRAW</name>
<sequence length="200" mass="22278">MAEEPKETGPGFQNPVAGFGVTFKAMFKKRLTEQYPEQQKTTAPRFHGRHQLNRHPDGLEKCVGCELCAWACPADAIYVEGADNTDEERYSPGERYGRVYQINYARCILCGLCIEACPTRALTMTNEFELADSSRANLIYTKEQLLAGLDDNMVDSPHAIYPGMDEQDYYRGLVTEAAPGTERQVAVSKGEKPQDEGVEA</sequence>
<accession>Q82DX3</accession>
<feature type="chain" id="PRO_0000245750" description="NADH-quinone oxidoreductase subunit I 1">
    <location>
        <begin position="1"/>
        <end position="200"/>
    </location>
</feature>
<feature type="domain" description="4Fe-4S ferredoxin-type 1" evidence="1">
    <location>
        <begin position="52"/>
        <end position="82"/>
    </location>
</feature>
<feature type="domain" description="4Fe-4S ferredoxin-type 2" evidence="1">
    <location>
        <begin position="98"/>
        <end position="127"/>
    </location>
</feature>
<feature type="region of interest" description="Disordered" evidence="2">
    <location>
        <begin position="181"/>
        <end position="200"/>
    </location>
</feature>
<feature type="compositionally biased region" description="Basic and acidic residues" evidence="2">
    <location>
        <begin position="189"/>
        <end position="200"/>
    </location>
</feature>
<feature type="binding site" evidence="1">
    <location>
        <position position="62"/>
    </location>
    <ligand>
        <name>[4Fe-4S] cluster</name>
        <dbReference type="ChEBI" id="CHEBI:49883"/>
        <label>1</label>
    </ligand>
</feature>
<feature type="binding site" evidence="1">
    <location>
        <position position="65"/>
    </location>
    <ligand>
        <name>[4Fe-4S] cluster</name>
        <dbReference type="ChEBI" id="CHEBI:49883"/>
        <label>1</label>
    </ligand>
</feature>
<feature type="binding site" evidence="1">
    <location>
        <position position="68"/>
    </location>
    <ligand>
        <name>[4Fe-4S] cluster</name>
        <dbReference type="ChEBI" id="CHEBI:49883"/>
        <label>1</label>
    </ligand>
</feature>
<feature type="binding site" evidence="1">
    <location>
        <position position="72"/>
    </location>
    <ligand>
        <name>[4Fe-4S] cluster</name>
        <dbReference type="ChEBI" id="CHEBI:49883"/>
        <label>2</label>
    </ligand>
</feature>
<feature type="binding site" evidence="1">
    <location>
        <position position="107"/>
    </location>
    <ligand>
        <name>[4Fe-4S] cluster</name>
        <dbReference type="ChEBI" id="CHEBI:49883"/>
        <label>2</label>
    </ligand>
</feature>
<feature type="binding site" evidence="1">
    <location>
        <position position="110"/>
    </location>
    <ligand>
        <name>[4Fe-4S] cluster</name>
        <dbReference type="ChEBI" id="CHEBI:49883"/>
        <label>2</label>
    </ligand>
</feature>
<feature type="binding site" evidence="1">
    <location>
        <position position="113"/>
    </location>
    <ligand>
        <name>[4Fe-4S] cluster</name>
        <dbReference type="ChEBI" id="CHEBI:49883"/>
        <label>2</label>
    </ligand>
</feature>
<feature type="binding site" evidence="1">
    <location>
        <position position="117"/>
    </location>
    <ligand>
        <name>[4Fe-4S] cluster</name>
        <dbReference type="ChEBI" id="CHEBI:49883"/>
        <label>1</label>
    </ligand>
</feature>
<proteinExistence type="inferred from homology"/>
<evidence type="ECO:0000255" key="1">
    <source>
        <dbReference type="HAMAP-Rule" id="MF_01351"/>
    </source>
</evidence>
<evidence type="ECO:0000256" key="2">
    <source>
        <dbReference type="SAM" id="MobiDB-lite"/>
    </source>
</evidence>
<organism>
    <name type="scientific">Streptomyces avermitilis (strain ATCC 31267 / DSM 46492 / JCM 5070 / NBRC 14893 / NCIMB 12804 / NRRL 8165 / MA-4680)</name>
    <dbReference type="NCBI Taxonomy" id="227882"/>
    <lineage>
        <taxon>Bacteria</taxon>
        <taxon>Bacillati</taxon>
        <taxon>Actinomycetota</taxon>
        <taxon>Actinomycetes</taxon>
        <taxon>Kitasatosporales</taxon>
        <taxon>Streptomycetaceae</taxon>
        <taxon>Streptomyces</taxon>
    </lineage>
</organism>